<sequence length="256" mass="28629">MRNSPVSPGPGYAPARGSERARRRGVARWLAYVGGVFAGAWLATQLYYAVQIAMWSVFDPGSSAFMRADAWRLSNAQPATTIRHRWVPYDQIARTLKRAVIASEDADFANNSGYEVDAILQAWEKNRARGRIVSGGSTITQQLARNLFLSGERSYIRKGQELIITWMLETLLDKERIFEIYLNSVEFGRGVYGAQAAAQYYYRIPASRLSAWQSARLAVMLPNPKYFDAHRGSPYLAQRAGVIARRMGAAELPASQ</sequence>
<comment type="function">
    <text evidence="1">Peptidoglycan polymerase that catalyzes glycan chain elongation from lipid-linked precursors.</text>
</comment>
<comment type="catalytic activity">
    <reaction evidence="1">
        <text>[GlcNAc-(1-&gt;4)-Mur2Ac(oyl-L-Ala-gamma-D-Glu-L-Lys-D-Ala-D-Ala)](n)-di-trans,octa-cis-undecaprenyl diphosphate + beta-D-GlcNAc-(1-&gt;4)-Mur2Ac(oyl-L-Ala-gamma-D-Glu-L-Lys-D-Ala-D-Ala)-di-trans,octa-cis-undecaprenyl diphosphate = [GlcNAc-(1-&gt;4)-Mur2Ac(oyl-L-Ala-gamma-D-Glu-L-Lys-D-Ala-D-Ala)](n+1)-di-trans,octa-cis-undecaprenyl diphosphate + di-trans,octa-cis-undecaprenyl diphosphate + H(+)</text>
        <dbReference type="Rhea" id="RHEA:23708"/>
        <dbReference type="Rhea" id="RHEA-COMP:9602"/>
        <dbReference type="Rhea" id="RHEA-COMP:9603"/>
        <dbReference type="ChEBI" id="CHEBI:15378"/>
        <dbReference type="ChEBI" id="CHEBI:58405"/>
        <dbReference type="ChEBI" id="CHEBI:60033"/>
        <dbReference type="ChEBI" id="CHEBI:78435"/>
        <dbReference type="EC" id="2.4.99.28"/>
    </reaction>
</comment>
<comment type="pathway">
    <text evidence="1">Cell wall biogenesis; peptidoglycan biosynthesis.</text>
</comment>
<comment type="subcellular location">
    <subcellularLocation>
        <location evidence="1">Cell inner membrane</location>
        <topology evidence="1">Single-pass membrane protein</topology>
    </subcellularLocation>
</comment>
<comment type="similarity">
    <text evidence="1">Belongs to the glycosyltransferase 51 family.</text>
</comment>
<keyword id="KW-0997">Cell inner membrane</keyword>
<keyword id="KW-1003">Cell membrane</keyword>
<keyword id="KW-0133">Cell shape</keyword>
<keyword id="KW-0961">Cell wall biogenesis/degradation</keyword>
<keyword id="KW-0328">Glycosyltransferase</keyword>
<keyword id="KW-0472">Membrane</keyword>
<keyword id="KW-0573">Peptidoglycan synthesis</keyword>
<keyword id="KW-1185">Reference proteome</keyword>
<keyword id="KW-0808">Transferase</keyword>
<keyword id="KW-0812">Transmembrane</keyword>
<keyword id="KW-1133">Transmembrane helix</keyword>
<accession>Q63QP9</accession>
<name>MTGA_BURPS</name>
<dbReference type="EC" id="2.4.99.28" evidence="1"/>
<dbReference type="EMBL" id="BX571965">
    <property type="protein sequence ID" value="CAH36985.1"/>
    <property type="molecule type" value="Genomic_DNA"/>
</dbReference>
<dbReference type="RefSeq" id="WP_004522050.1">
    <property type="nucleotide sequence ID" value="NZ_CP009538.1"/>
</dbReference>
<dbReference type="RefSeq" id="YP_109569.1">
    <property type="nucleotide sequence ID" value="NC_006350.1"/>
</dbReference>
<dbReference type="SMR" id="Q63QP9"/>
<dbReference type="STRING" id="272560.BPSL2975"/>
<dbReference type="GeneID" id="93061573"/>
<dbReference type="KEGG" id="bps:BPSL2975"/>
<dbReference type="PATRIC" id="fig|272560.51.peg.2299"/>
<dbReference type="eggNOG" id="COG0744">
    <property type="taxonomic scope" value="Bacteria"/>
</dbReference>
<dbReference type="UniPathway" id="UPA00219"/>
<dbReference type="Proteomes" id="UP000000605">
    <property type="component" value="Chromosome 1"/>
</dbReference>
<dbReference type="GO" id="GO:0009274">
    <property type="term" value="C:peptidoglycan-based cell wall"/>
    <property type="evidence" value="ECO:0007669"/>
    <property type="project" value="InterPro"/>
</dbReference>
<dbReference type="GO" id="GO:0005886">
    <property type="term" value="C:plasma membrane"/>
    <property type="evidence" value="ECO:0007669"/>
    <property type="project" value="UniProtKB-SubCell"/>
</dbReference>
<dbReference type="GO" id="GO:0016763">
    <property type="term" value="F:pentosyltransferase activity"/>
    <property type="evidence" value="ECO:0007669"/>
    <property type="project" value="InterPro"/>
</dbReference>
<dbReference type="GO" id="GO:0008955">
    <property type="term" value="F:peptidoglycan glycosyltransferase activity"/>
    <property type="evidence" value="ECO:0007669"/>
    <property type="project" value="UniProtKB-UniRule"/>
</dbReference>
<dbReference type="GO" id="GO:0071555">
    <property type="term" value="P:cell wall organization"/>
    <property type="evidence" value="ECO:0007669"/>
    <property type="project" value="UniProtKB-KW"/>
</dbReference>
<dbReference type="GO" id="GO:0009252">
    <property type="term" value="P:peptidoglycan biosynthetic process"/>
    <property type="evidence" value="ECO:0007669"/>
    <property type="project" value="UniProtKB-UniRule"/>
</dbReference>
<dbReference type="GO" id="GO:0008360">
    <property type="term" value="P:regulation of cell shape"/>
    <property type="evidence" value="ECO:0007669"/>
    <property type="project" value="UniProtKB-KW"/>
</dbReference>
<dbReference type="Gene3D" id="1.10.3810.10">
    <property type="entry name" value="Biosynthetic peptidoglycan transglycosylase-like"/>
    <property type="match status" value="1"/>
</dbReference>
<dbReference type="HAMAP" id="MF_00766">
    <property type="entry name" value="PGT_MtgA"/>
    <property type="match status" value="1"/>
</dbReference>
<dbReference type="InterPro" id="IPR001264">
    <property type="entry name" value="Glyco_trans_51"/>
</dbReference>
<dbReference type="InterPro" id="IPR023346">
    <property type="entry name" value="Lysozyme-like_dom_sf"/>
</dbReference>
<dbReference type="InterPro" id="IPR036950">
    <property type="entry name" value="PBP_transglycosylase"/>
</dbReference>
<dbReference type="InterPro" id="IPR011812">
    <property type="entry name" value="Pep_trsgly"/>
</dbReference>
<dbReference type="NCBIfam" id="TIGR02070">
    <property type="entry name" value="mono_pep_trsgly"/>
    <property type="match status" value="1"/>
</dbReference>
<dbReference type="PANTHER" id="PTHR30400:SF0">
    <property type="entry name" value="BIOSYNTHETIC PEPTIDOGLYCAN TRANSGLYCOSYLASE"/>
    <property type="match status" value="1"/>
</dbReference>
<dbReference type="PANTHER" id="PTHR30400">
    <property type="entry name" value="MONOFUNCTIONAL BIOSYNTHETIC PEPTIDOGLYCAN TRANSGLYCOSYLASE"/>
    <property type="match status" value="1"/>
</dbReference>
<dbReference type="Pfam" id="PF00912">
    <property type="entry name" value="Transgly"/>
    <property type="match status" value="1"/>
</dbReference>
<dbReference type="SUPFAM" id="SSF53955">
    <property type="entry name" value="Lysozyme-like"/>
    <property type="match status" value="1"/>
</dbReference>
<protein>
    <recommendedName>
        <fullName evidence="1">Biosynthetic peptidoglycan transglycosylase</fullName>
        <ecNumber evidence="1">2.4.99.28</ecNumber>
    </recommendedName>
    <alternativeName>
        <fullName evidence="1">Glycan polymerase</fullName>
    </alternativeName>
    <alternativeName>
        <fullName evidence="1">Peptidoglycan glycosyltransferase MtgA</fullName>
        <shortName evidence="1">PGT</shortName>
    </alternativeName>
</protein>
<feature type="chain" id="PRO_0000257661" description="Biosynthetic peptidoglycan transglycosylase">
    <location>
        <begin position="1"/>
        <end position="256"/>
    </location>
</feature>
<feature type="transmembrane region" description="Helical" evidence="1">
    <location>
        <begin position="26"/>
        <end position="48"/>
    </location>
</feature>
<evidence type="ECO:0000255" key="1">
    <source>
        <dbReference type="HAMAP-Rule" id="MF_00766"/>
    </source>
</evidence>
<reference key="1">
    <citation type="journal article" date="2004" name="Proc. Natl. Acad. Sci. U.S.A.">
        <title>Genomic plasticity of the causative agent of melioidosis, Burkholderia pseudomallei.</title>
        <authorList>
            <person name="Holden M.T.G."/>
            <person name="Titball R.W."/>
            <person name="Peacock S.J."/>
            <person name="Cerdeno-Tarraga A.-M."/>
            <person name="Atkins T."/>
            <person name="Crossman L.C."/>
            <person name="Pitt T."/>
            <person name="Churcher C."/>
            <person name="Mungall K.L."/>
            <person name="Bentley S.D."/>
            <person name="Sebaihia M."/>
            <person name="Thomson N.R."/>
            <person name="Bason N."/>
            <person name="Beacham I.R."/>
            <person name="Brooks K."/>
            <person name="Brown K.A."/>
            <person name="Brown N.F."/>
            <person name="Challis G.L."/>
            <person name="Cherevach I."/>
            <person name="Chillingworth T."/>
            <person name="Cronin A."/>
            <person name="Crossett B."/>
            <person name="Davis P."/>
            <person name="DeShazer D."/>
            <person name="Feltwell T."/>
            <person name="Fraser A."/>
            <person name="Hance Z."/>
            <person name="Hauser H."/>
            <person name="Holroyd S."/>
            <person name="Jagels K."/>
            <person name="Keith K.E."/>
            <person name="Maddison M."/>
            <person name="Moule S."/>
            <person name="Price C."/>
            <person name="Quail M.A."/>
            <person name="Rabbinowitsch E."/>
            <person name="Rutherford K."/>
            <person name="Sanders M."/>
            <person name="Simmonds M."/>
            <person name="Songsivilai S."/>
            <person name="Stevens K."/>
            <person name="Tumapa S."/>
            <person name="Vesaratchavest M."/>
            <person name="Whitehead S."/>
            <person name="Yeats C."/>
            <person name="Barrell B.G."/>
            <person name="Oyston P.C.F."/>
            <person name="Parkhill J."/>
        </authorList>
    </citation>
    <scope>NUCLEOTIDE SEQUENCE [LARGE SCALE GENOMIC DNA]</scope>
    <source>
        <strain>K96243</strain>
    </source>
</reference>
<gene>
    <name evidence="1" type="primary">mtgA</name>
    <name type="ordered locus">BPSL2975</name>
</gene>
<organism>
    <name type="scientific">Burkholderia pseudomallei (strain K96243)</name>
    <dbReference type="NCBI Taxonomy" id="272560"/>
    <lineage>
        <taxon>Bacteria</taxon>
        <taxon>Pseudomonadati</taxon>
        <taxon>Pseudomonadota</taxon>
        <taxon>Betaproteobacteria</taxon>
        <taxon>Burkholderiales</taxon>
        <taxon>Burkholderiaceae</taxon>
        <taxon>Burkholderia</taxon>
        <taxon>pseudomallei group</taxon>
    </lineage>
</organism>
<proteinExistence type="inferred from homology"/>